<name>TGD3_ARATH</name>
<sequence>MLSLSCSSSSSSLLPPSLHYHGSSSVQSIVVPRRSLISFRRKVSCCCIAPPQNLDNDATKFDSLTKSGGGMCKERGLENDSDVLIECRDVYKSFGEKHILKGVSFKIRHGEAVGVIGPSGTGKSTILKIMAGLLAPDKGEVYIRGKKRAGLISDEEISGLRIGLVFQSAALFDSLSVRENVGFLLYERSKMSENQISELVTQTLAAVGLKGVENRLPSELSGGMKKRVALARSLIFDTTKEVIEPEVLLYDEPTAGLDPIASTVVEDLIRSVHMTDEDAVGKPGKIASYLVVTHQHSTIQRAVDRLLFLYEGKIVWQGMTHEFTTSTNPIVQQFATGSLDGPIRY</sequence>
<proteinExistence type="evidence at protein level"/>
<feature type="transit peptide" description="Chloroplast" evidence="1">
    <location>
        <begin position="1"/>
        <end position="46"/>
    </location>
</feature>
<feature type="chain" id="PRO_0000250662" description="Protein TRIGALACTOSYLDIACYLGLYCEROL 3, chloroplastic">
    <location>
        <begin position="47"/>
        <end position="345"/>
    </location>
</feature>
<feature type="domain" description="ABC transporter" evidence="2">
    <location>
        <begin position="85"/>
        <end position="336"/>
    </location>
</feature>
<feature type="binding site" evidence="2">
    <location>
        <begin position="117"/>
        <end position="124"/>
    </location>
    <ligand>
        <name>ATP</name>
        <dbReference type="ChEBI" id="CHEBI:30616"/>
    </ligand>
</feature>
<feature type="mutagenesis site" description="Reduced ATPase activity and transport properties." evidence="3">
    <original>F</original>
    <variation>A</variation>
    <location>
        <position position="94"/>
    </location>
</feature>
<gene>
    <name evidence="10" type="primary">TGD3</name>
    <name evidence="11" type="synonym">ABCI13</name>
    <name evidence="9" type="synonym">NAP11</name>
    <name evidence="13" type="ordered locus">At1g65410</name>
    <name evidence="14" type="ORF">T8F5.19</name>
</gene>
<organism>
    <name type="scientific">Arabidopsis thaliana</name>
    <name type="common">Mouse-ear cress</name>
    <dbReference type="NCBI Taxonomy" id="3702"/>
    <lineage>
        <taxon>Eukaryota</taxon>
        <taxon>Viridiplantae</taxon>
        <taxon>Streptophyta</taxon>
        <taxon>Embryophyta</taxon>
        <taxon>Tracheophyta</taxon>
        <taxon>Spermatophyta</taxon>
        <taxon>Magnoliopsida</taxon>
        <taxon>eudicotyledons</taxon>
        <taxon>Gunneridae</taxon>
        <taxon>Pentapetalae</taxon>
        <taxon>rosids</taxon>
        <taxon>malvids</taxon>
        <taxon>Brassicales</taxon>
        <taxon>Brassicaceae</taxon>
        <taxon>Camelineae</taxon>
        <taxon>Arabidopsis</taxon>
    </lineage>
</organism>
<comment type="function">
    <text evidence="3 5">ATPase transporter involved in lipid transfer from the endoplasmic reticulum (ER) to plastids, and necessary for thylakoids formation. Not involved in transition metal transport pathways (PubMed:20132520).</text>
</comment>
<comment type="subunit">
    <text evidence="6 8">Catalytic subunit of the TGD complex, a lipid translocator at the inner chloroplast envelope membrane made of TGD1, TGD2 and TGD3 (PubMed:22544736). Interacts with TGD1 and TGD2 with an overall subunit stoichiometry of 2 TGD1, 2 TGD3 and 8 to 12 TGD2 (PubMed:22544736). Interacts with TGD5 (PubMed:26410300).</text>
</comment>
<comment type="subcellular location">
    <subcellularLocation>
        <location evidence="3 4">Plastid</location>
        <location evidence="3 4">Chloroplast stroma</location>
    </subcellularLocation>
</comment>
<comment type="disruption phenotype">
    <text evidence="3 5 7">Disruption in the biosynthesis of ER-derived thylakoid lipids, and accumulation of oligogalactolipids, triacylglycerols (TAGs), and phosphatidates (PAs). Accumulates Gal(beta 1,6)betaGalDG, an unusual form of digalactosyldiacylglycerol (PubMed:23463370). Growth retardation, early bolting and no viable seeds produced (PubMed:20132520).</text>
</comment>
<comment type="similarity">
    <text evidence="12">Belongs to the ABC transporter superfamily. ABCI family.</text>
</comment>
<comment type="sequence caution" evidence="12">
    <conflict type="erroneous gene model prediction">
        <sequence resource="EMBL-CDS" id="AAC27147"/>
    </conflict>
</comment>
<accession>Q9AT00</accession>
<accession>O80812</accession>
<accession>Q84JX9</accession>
<evidence type="ECO:0000255" key="1"/>
<evidence type="ECO:0000255" key="2">
    <source>
        <dbReference type="PROSITE-ProRule" id="PRU00434"/>
    </source>
</evidence>
<evidence type="ECO:0000269" key="3">
    <source>
    </source>
</evidence>
<evidence type="ECO:0000269" key="4">
    <source>
    </source>
</evidence>
<evidence type="ECO:0000269" key="5">
    <source>
    </source>
</evidence>
<evidence type="ECO:0000269" key="6">
    <source>
    </source>
</evidence>
<evidence type="ECO:0000269" key="7">
    <source>
    </source>
</evidence>
<evidence type="ECO:0000269" key="8">
    <source>
    </source>
</evidence>
<evidence type="ECO:0000303" key="9">
    <source>
    </source>
</evidence>
<evidence type="ECO:0000303" key="10">
    <source>
    </source>
</evidence>
<evidence type="ECO:0000303" key="11">
    <source>
    </source>
</evidence>
<evidence type="ECO:0000305" key="12"/>
<evidence type="ECO:0000312" key="13">
    <source>
        <dbReference type="Araport" id="AT1G65410"/>
    </source>
</evidence>
<evidence type="ECO:0000312" key="14">
    <source>
        <dbReference type="EMBL" id="AAC27147.1"/>
    </source>
</evidence>
<keyword id="KW-0067">ATP-binding</keyword>
<keyword id="KW-0150">Chloroplast</keyword>
<keyword id="KW-0445">Lipid transport</keyword>
<keyword id="KW-0547">Nucleotide-binding</keyword>
<keyword id="KW-0934">Plastid</keyword>
<keyword id="KW-1185">Reference proteome</keyword>
<keyword id="KW-0809">Transit peptide</keyword>
<keyword id="KW-0813">Transport</keyword>
<protein>
    <recommendedName>
        <fullName evidence="10">Protein TRIGALACTOSYLDIACYLGLYCEROL 3, chloroplastic</fullName>
    </recommendedName>
    <alternativeName>
        <fullName evidence="11">ABC transporter I family member 13</fullName>
        <shortName evidence="11">ABC transporter ABCI.13</shortName>
        <shortName evidence="11">AtABCI13</shortName>
    </alternativeName>
    <alternativeName>
        <fullName evidence="9">Non-intrinsic ABC protein 11</fullName>
        <shortName evidence="9">AtNAP11</shortName>
    </alternativeName>
</protein>
<dbReference type="EMBL" id="AC004512">
    <property type="protein sequence ID" value="AAC27147.1"/>
    <property type="status" value="ALT_SEQ"/>
    <property type="molecule type" value="Genomic_DNA"/>
</dbReference>
<dbReference type="EMBL" id="CP002684">
    <property type="protein sequence ID" value="AEE34370.1"/>
    <property type="molecule type" value="Genomic_DNA"/>
</dbReference>
<dbReference type="EMBL" id="AF361573">
    <property type="protein sequence ID" value="AAK32741.1"/>
    <property type="molecule type" value="mRNA"/>
</dbReference>
<dbReference type="EMBL" id="AY093985">
    <property type="protein sequence ID" value="AAM16246.1"/>
    <property type="molecule type" value="mRNA"/>
</dbReference>
<dbReference type="EMBL" id="AF528639">
    <property type="protein sequence ID" value="AAO43374.1"/>
    <property type="molecule type" value="Genomic_DNA"/>
</dbReference>
<dbReference type="EMBL" id="AF528640">
    <property type="protein sequence ID" value="AAO43375.1"/>
    <property type="molecule type" value="Genomic_DNA"/>
</dbReference>
<dbReference type="EMBL" id="AF528641">
    <property type="protein sequence ID" value="AAO43376.1"/>
    <property type="molecule type" value="Genomic_DNA"/>
</dbReference>
<dbReference type="EMBL" id="AF528642">
    <property type="protein sequence ID" value="AAO43377.1"/>
    <property type="molecule type" value="Genomic_DNA"/>
</dbReference>
<dbReference type="EMBL" id="AF528643">
    <property type="protein sequence ID" value="AAO43378.1"/>
    <property type="molecule type" value="Genomic_DNA"/>
</dbReference>
<dbReference type="EMBL" id="AF528644">
    <property type="protein sequence ID" value="AAO43379.1"/>
    <property type="molecule type" value="Genomic_DNA"/>
</dbReference>
<dbReference type="EMBL" id="AF528645">
    <property type="protein sequence ID" value="AAO43380.1"/>
    <property type="molecule type" value="Genomic_DNA"/>
</dbReference>
<dbReference type="EMBL" id="AF528646">
    <property type="protein sequence ID" value="AAO43381.1"/>
    <property type="molecule type" value="Genomic_DNA"/>
</dbReference>
<dbReference type="EMBL" id="AF528647">
    <property type="protein sequence ID" value="AAO43382.1"/>
    <property type="molecule type" value="Genomic_DNA"/>
</dbReference>
<dbReference type="PIR" id="T02364">
    <property type="entry name" value="T02364"/>
</dbReference>
<dbReference type="RefSeq" id="NP_564850.1">
    <property type="nucleotide sequence ID" value="NM_105215.3"/>
</dbReference>
<dbReference type="SMR" id="Q9AT00"/>
<dbReference type="BioGRID" id="28073">
    <property type="interactions" value="2"/>
</dbReference>
<dbReference type="FunCoup" id="Q9AT00">
    <property type="interactions" value="132"/>
</dbReference>
<dbReference type="STRING" id="3702.Q9AT00"/>
<dbReference type="TCDB" id="3.A.1.27.2">
    <property type="family name" value="the atp-binding cassette (abc) superfamily"/>
</dbReference>
<dbReference type="PaxDb" id="3702-AT1G65410.1"/>
<dbReference type="ProteomicsDB" id="246400"/>
<dbReference type="EnsemblPlants" id="AT1G65410.1">
    <property type="protein sequence ID" value="AT1G65410.1"/>
    <property type="gene ID" value="AT1G65410"/>
</dbReference>
<dbReference type="GeneID" id="842852"/>
<dbReference type="Gramene" id="AT1G65410.1">
    <property type="protein sequence ID" value="AT1G65410.1"/>
    <property type="gene ID" value="AT1G65410"/>
</dbReference>
<dbReference type="KEGG" id="ath:AT1G65410"/>
<dbReference type="Araport" id="AT1G65410"/>
<dbReference type="TAIR" id="AT1G65410">
    <property type="gene designation" value="ABCI13"/>
</dbReference>
<dbReference type="eggNOG" id="KOG0055">
    <property type="taxonomic scope" value="Eukaryota"/>
</dbReference>
<dbReference type="HOGENOM" id="CLU_000604_1_22_1"/>
<dbReference type="InParanoid" id="Q9AT00"/>
<dbReference type="OMA" id="PEVMFFD"/>
<dbReference type="OrthoDB" id="6500128at2759"/>
<dbReference type="PhylomeDB" id="Q9AT00"/>
<dbReference type="PRO" id="PR:Q9AT00"/>
<dbReference type="Proteomes" id="UP000006548">
    <property type="component" value="Chromosome 1"/>
</dbReference>
<dbReference type="ExpressionAtlas" id="Q9AT00">
    <property type="expression patterns" value="baseline and differential"/>
</dbReference>
<dbReference type="GO" id="GO:0009507">
    <property type="term" value="C:chloroplast"/>
    <property type="evidence" value="ECO:0000314"/>
    <property type="project" value="TAIR"/>
</dbReference>
<dbReference type="GO" id="GO:0009570">
    <property type="term" value="C:chloroplast stroma"/>
    <property type="evidence" value="ECO:0007669"/>
    <property type="project" value="UniProtKB-SubCell"/>
</dbReference>
<dbReference type="GO" id="GO:0005634">
    <property type="term" value="C:nucleus"/>
    <property type="evidence" value="ECO:0007005"/>
    <property type="project" value="TAIR"/>
</dbReference>
<dbReference type="GO" id="GO:0009536">
    <property type="term" value="C:plastid"/>
    <property type="evidence" value="ECO:0007005"/>
    <property type="project" value="TAIR"/>
</dbReference>
<dbReference type="GO" id="GO:0005524">
    <property type="term" value="F:ATP binding"/>
    <property type="evidence" value="ECO:0007669"/>
    <property type="project" value="UniProtKB-KW"/>
</dbReference>
<dbReference type="GO" id="GO:0016887">
    <property type="term" value="F:ATP hydrolysis activity"/>
    <property type="evidence" value="ECO:0000314"/>
    <property type="project" value="TAIR"/>
</dbReference>
<dbReference type="GO" id="GO:0006869">
    <property type="term" value="P:lipid transport"/>
    <property type="evidence" value="ECO:0000315"/>
    <property type="project" value="TAIR"/>
</dbReference>
<dbReference type="CDD" id="cd03261">
    <property type="entry name" value="ABC_Org_Solvent_Resistant"/>
    <property type="match status" value="1"/>
</dbReference>
<dbReference type="FunFam" id="3.40.50.300:FF:002502">
    <property type="entry name" value="Protein TRIGALACTOSYLDIACYLGLYCEROL 3, chloroplastic"/>
    <property type="match status" value="1"/>
</dbReference>
<dbReference type="Gene3D" id="3.40.50.300">
    <property type="entry name" value="P-loop containing nucleotide triphosphate hydrolases"/>
    <property type="match status" value="1"/>
</dbReference>
<dbReference type="InterPro" id="IPR003593">
    <property type="entry name" value="AAA+_ATPase"/>
</dbReference>
<dbReference type="InterPro" id="IPR003439">
    <property type="entry name" value="ABC_transporter-like_ATP-bd"/>
</dbReference>
<dbReference type="InterPro" id="IPR017871">
    <property type="entry name" value="ABC_transporter-like_CS"/>
</dbReference>
<dbReference type="InterPro" id="IPR027417">
    <property type="entry name" value="P-loop_NTPase"/>
</dbReference>
<dbReference type="PANTHER" id="PTHR43023">
    <property type="entry name" value="PROTEIN TRIGALACTOSYLDIACYLGLYCEROL 3, CHLOROPLASTIC"/>
    <property type="match status" value="1"/>
</dbReference>
<dbReference type="PANTHER" id="PTHR43023:SF3">
    <property type="entry name" value="PROTEIN TRIGALACTOSYLDIACYLGLYCEROL 3, CHLOROPLASTIC"/>
    <property type="match status" value="1"/>
</dbReference>
<dbReference type="Pfam" id="PF00005">
    <property type="entry name" value="ABC_tran"/>
    <property type="match status" value="1"/>
</dbReference>
<dbReference type="SMART" id="SM00382">
    <property type="entry name" value="AAA"/>
    <property type="match status" value="1"/>
</dbReference>
<dbReference type="SUPFAM" id="SSF52540">
    <property type="entry name" value="P-loop containing nucleoside triphosphate hydrolases"/>
    <property type="match status" value="1"/>
</dbReference>
<dbReference type="PROSITE" id="PS00211">
    <property type="entry name" value="ABC_TRANSPORTER_1"/>
    <property type="match status" value="1"/>
</dbReference>
<dbReference type="PROSITE" id="PS50893">
    <property type="entry name" value="ABC_TRANSPORTER_2"/>
    <property type="match status" value="1"/>
</dbReference>
<reference key="1">
    <citation type="journal article" date="2000" name="Nature">
        <title>Sequence and analysis of chromosome 1 of the plant Arabidopsis thaliana.</title>
        <authorList>
            <person name="Theologis A."/>
            <person name="Ecker J.R."/>
            <person name="Palm C.J."/>
            <person name="Federspiel N.A."/>
            <person name="Kaul S."/>
            <person name="White O."/>
            <person name="Alonso J."/>
            <person name="Altafi H."/>
            <person name="Araujo R."/>
            <person name="Bowman C.L."/>
            <person name="Brooks S.Y."/>
            <person name="Buehler E."/>
            <person name="Chan A."/>
            <person name="Chao Q."/>
            <person name="Chen H."/>
            <person name="Cheuk R.F."/>
            <person name="Chin C.W."/>
            <person name="Chung M.K."/>
            <person name="Conn L."/>
            <person name="Conway A.B."/>
            <person name="Conway A.R."/>
            <person name="Creasy T.H."/>
            <person name="Dewar K."/>
            <person name="Dunn P."/>
            <person name="Etgu P."/>
            <person name="Feldblyum T.V."/>
            <person name="Feng J.-D."/>
            <person name="Fong B."/>
            <person name="Fujii C.Y."/>
            <person name="Gill J.E."/>
            <person name="Goldsmith A.D."/>
            <person name="Haas B."/>
            <person name="Hansen N.F."/>
            <person name="Hughes B."/>
            <person name="Huizar L."/>
            <person name="Hunter J.L."/>
            <person name="Jenkins J."/>
            <person name="Johnson-Hopson C."/>
            <person name="Khan S."/>
            <person name="Khaykin E."/>
            <person name="Kim C.J."/>
            <person name="Koo H.L."/>
            <person name="Kremenetskaia I."/>
            <person name="Kurtz D.B."/>
            <person name="Kwan A."/>
            <person name="Lam B."/>
            <person name="Langin-Hooper S."/>
            <person name="Lee A."/>
            <person name="Lee J.M."/>
            <person name="Lenz C.A."/>
            <person name="Li J.H."/>
            <person name="Li Y.-P."/>
            <person name="Lin X."/>
            <person name="Liu S.X."/>
            <person name="Liu Z.A."/>
            <person name="Luros J.S."/>
            <person name="Maiti R."/>
            <person name="Marziali A."/>
            <person name="Militscher J."/>
            <person name="Miranda M."/>
            <person name="Nguyen M."/>
            <person name="Nierman W.C."/>
            <person name="Osborne B.I."/>
            <person name="Pai G."/>
            <person name="Peterson J."/>
            <person name="Pham P.K."/>
            <person name="Rizzo M."/>
            <person name="Rooney T."/>
            <person name="Rowley D."/>
            <person name="Sakano H."/>
            <person name="Salzberg S.L."/>
            <person name="Schwartz J.R."/>
            <person name="Shinn P."/>
            <person name="Southwick A.M."/>
            <person name="Sun H."/>
            <person name="Tallon L.J."/>
            <person name="Tambunga G."/>
            <person name="Toriumi M.J."/>
            <person name="Town C.D."/>
            <person name="Utterback T."/>
            <person name="Van Aken S."/>
            <person name="Vaysberg M."/>
            <person name="Vysotskaia V.S."/>
            <person name="Walker M."/>
            <person name="Wu D."/>
            <person name="Yu G."/>
            <person name="Fraser C.M."/>
            <person name="Venter J.C."/>
            <person name="Davis R.W."/>
        </authorList>
    </citation>
    <scope>NUCLEOTIDE SEQUENCE [LARGE SCALE GENOMIC DNA]</scope>
    <source>
        <strain>cv. Columbia</strain>
    </source>
</reference>
<reference key="2">
    <citation type="journal article" date="2017" name="Plant J.">
        <title>Araport11: a complete reannotation of the Arabidopsis thaliana reference genome.</title>
        <authorList>
            <person name="Cheng C.Y."/>
            <person name="Krishnakumar V."/>
            <person name="Chan A.P."/>
            <person name="Thibaud-Nissen F."/>
            <person name="Schobel S."/>
            <person name="Town C.D."/>
        </authorList>
    </citation>
    <scope>GENOME REANNOTATION</scope>
    <source>
        <strain>cv. Columbia</strain>
    </source>
</reference>
<reference key="3">
    <citation type="journal article" date="2003" name="Science">
        <title>Empirical analysis of transcriptional activity in the Arabidopsis genome.</title>
        <authorList>
            <person name="Yamada K."/>
            <person name="Lim J."/>
            <person name="Dale J.M."/>
            <person name="Chen H."/>
            <person name="Shinn P."/>
            <person name="Palm C.J."/>
            <person name="Southwick A.M."/>
            <person name="Wu H.C."/>
            <person name="Kim C.J."/>
            <person name="Nguyen M."/>
            <person name="Pham P.K."/>
            <person name="Cheuk R.F."/>
            <person name="Karlin-Newmann G."/>
            <person name="Liu S.X."/>
            <person name="Lam B."/>
            <person name="Sakano H."/>
            <person name="Wu T."/>
            <person name="Yu G."/>
            <person name="Miranda M."/>
            <person name="Quach H.L."/>
            <person name="Tripp M."/>
            <person name="Chang C.H."/>
            <person name="Lee J.M."/>
            <person name="Toriumi M.J."/>
            <person name="Chan M.M."/>
            <person name="Tang C.C."/>
            <person name="Onodera C.S."/>
            <person name="Deng J.M."/>
            <person name="Akiyama K."/>
            <person name="Ansari Y."/>
            <person name="Arakawa T."/>
            <person name="Banh J."/>
            <person name="Banno F."/>
            <person name="Bowser L."/>
            <person name="Brooks S.Y."/>
            <person name="Carninci P."/>
            <person name="Chao Q."/>
            <person name="Choy N."/>
            <person name="Enju A."/>
            <person name="Goldsmith A.D."/>
            <person name="Gurjal M."/>
            <person name="Hansen N.F."/>
            <person name="Hayashizaki Y."/>
            <person name="Johnson-Hopson C."/>
            <person name="Hsuan V.W."/>
            <person name="Iida K."/>
            <person name="Karnes M."/>
            <person name="Khan S."/>
            <person name="Koesema E."/>
            <person name="Ishida J."/>
            <person name="Jiang P.X."/>
            <person name="Jones T."/>
            <person name="Kawai J."/>
            <person name="Kamiya A."/>
            <person name="Meyers C."/>
            <person name="Nakajima M."/>
            <person name="Narusaka M."/>
            <person name="Seki M."/>
            <person name="Sakurai T."/>
            <person name="Satou M."/>
            <person name="Tamse R."/>
            <person name="Vaysberg M."/>
            <person name="Wallender E.K."/>
            <person name="Wong C."/>
            <person name="Yamamura Y."/>
            <person name="Yuan S."/>
            <person name="Shinozaki K."/>
            <person name="Davis R.W."/>
            <person name="Theologis A."/>
            <person name="Ecker J.R."/>
        </authorList>
    </citation>
    <scope>NUCLEOTIDE SEQUENCE [LARGE SCALE MRNA]</scope>
    <source>
        <strain>cv. Columbia</strain>
    </source>
</reference>
<reference key="4">
    <citation type="journal article" date="2003" name="Genetics">
        <title>Molecular population genetics of the Arabidopsis CLAVATA2 region: the genomic scale of variation and selection in a selfing species.</title>
        <authorList>
            <person name="Shepard K.A."/>
            <person name="Purugganan M.D."/>
        </authorList>
    </citation>
    <scope>NUCLEOTIDE SEQUENCE [GENOMIC DNA] OF 139-264</scope>
    <source>
        <strain>cv. Bla-1</strain>
        <strain>cv. Bs-1</strain>
        <strain>cv. Chi-1</strain>
        <strain>cv. Co-1</strain>
        <strain>cv. Cvi-0</strain>
        <strain>cv. Gr-3</strain>
        <strain>cv. Ita-0</strain>
        <strain>cv. Kas-1</strain>
        <strain>cv. Lisse-2</strain>
    </source>
</reference>
<reference key="5">
    <citation type="journal article" date="2001" name="J. Biol. Chem.">
        <title>The Arabidopsis thaliana ABC protein superfamily, a complete inventory.</title>
        <authorList>
            <person name="Sanchez-Fernandez R."/>
            <person name="Davies T.G."/>
            <person name="Coleman J.O."/>
            <person name="Rea P.A."/>
        </authorList>
    </citation>
    <scope>GENE FAMILY</scope>
    <scope>NOMENCLATURE</scope>
</reference>
<reference key="6">
    <citation type="journal article" date="2007" name="J. Biol. Chem.">
        <title>A small ATPase protein of Arabidopsis, TGD3, involved in chloroplast lipid import.</title>
        <authorList>
            <person name="Lu B."/>
            <person name="Xu C."/>
            <person name="Awai K."/>
            <person name="Jones A.D."/>
            <person name="Benning C."/>
        </authorList>
    </citation>
    <scope>FUNCTION</scope>
    <scope>MUTAGENESIS OF PHE-94</scope>
    <scope>SUBCELLULAR LOCATION</scope>
    <scope>DISRUPTION PHENOTYPE</scope>
</reference>
<reference key="7">
    <citation type="journal article" date="2008" name="PLoS ONE">
        <title>Sorting signals, N-terminal modifications and abundance of the chloroplast proteome.</title>
        <authorList>
            <person name="Zybailov B."/>
            <person name="Rutschow H."/>
            <person name="Friso G."/>
            <person name="Rudella A."/>
            <person name="Emanuelsson O."/>
            <person name="Sun Q."/>
            <person name="van Wijk K.J."/>
        </authorList>
    </citation>
    <scope>IDENTIFICATION BY MASS SPECTROMETRY</scope>
    <scope>SUBCELLULAR LOCATION [LARGE SCALE ANALYSIS]</scope>
</reference>
<reference key="8">
    <citation type="journal article" date="2008" name="Trends Plant Sci.">
        <title>Plant ABC proteins - a unified nomenclature and updated inventory.</title>
        <authorList>
            <person name="Verrier P.J."/>
            <person name="Bird D."/>
            <person name="Burla B."/>
            <person name="Dassa E."/>
            <person name="Forestier C."/>
            <person name="Geisler M."/>
            <person name="Klein M."/>
            <person name="Kolukisaoglu H.U."/>
            <person name="Lee Y."/>
            <person name="Martinoia E."/>
            <person name="Murphy A."/>
            <person name="Rea P.A."/>
            <person name="Samuels L."/>
            <person name="Schulz B."/>
            <person name="Spalding E.J."/>
            <person name="Yazaki K."/>
            <person name="Theodoulou F.L."/>
        </authorList>
    </citation>
    <scope>GENE FAMILY</scope>
    <scope>NOMENCLATURE</scope>
</reference>
<reference key="9">
    <citation type="journal article" date="2010" name="Plant Cell Environ.">
        <title>Disruption of Nap14, a plastid-localized non-intrinsic ABC protein in Arabidopsis thaliana results in the over-accumulation of transition metals and in aberrant chloroplast structures.</title>
        <authorList>
            <person name="Shimoni-Shor E."/>
            <person name="Hassidim M."/>
            <person name="Yuval-Naeh N."/>
            <person name="Keren N."/>
        </authorList>
    </citation>
    <scope>FUNCTION</scope>
    <scope>DISRUPTION PHENOTYPE</scope>
</reference>
<reference key="10">
    <citation type="journal article" date="2012" name="J. Biol. Chem.">
        <title>TGD1, -2, and -3 proteins involved in lipid trafficking form ATP-binding cassette (ABC) transporter with multiple substrate-binding proteins.</title>
        <authorList>
            <person name="Roston R.L."/>
            <person name="Gao J."/>
            <person name="Murcha M.W."/>
            <person name="Whelan J."/>
            <person name="Benning C."/>
        </authorList>
    </citation>
    <scope>IDENTIFICATION IN THE TGD COMPLEX</scope>
    <scope>INTERACTION WITH TGD1 AND TGD3</scope>
</reference>
<reference key="11">
    <citation type="journal article" date="2013" name="Metabolomics">
        <title>Plant lipidomics based on hydrophilic interaction chromatography coupled to ion trap time-of-flight mass spectrometry.</title>
        <authorList>
            <person name="Okazaki Y."/>
            <person name="Kamide Y."/>
            <person name="Hirai M.Y."/>
            <person name="Saito K."/>
        </authorList>
    </citation>
    <scope>DISRUPTION PHENOTYPE</scope>
</reference>
<reference key="12">
    <citation type="journal article" date="2015" name="Plant Cell">
        <title>Arabidopsis TRIGALACTOSYLDIACYLGLYCEROL5 interacts with TGD1, TGD2, and TGD4 to facilitate lipid transfer from the endoplasmic reticulum to plastids.</title>
        <authorList>
            <person name="Fan J."/>
            <person name="Zhai Z."/>
            <person name="Yan C."/>
            <person name="Xu C."/>
        </authorList>
    </citation>
    <scope>INTERACTION WITH TGD5</scope>
</reference>